<gene>
    <name evidence="1" type="primary">rpoA</name>
    <name type="ordered locus">BARBAKC583_0722</name>
</gene>
<dbReference type="EC" id="2.7.7.6" evidence="1"/>
<dbReference type="EMBL" id="CP000524">
    <property type="protein sequence ID" value="ABM44612.1"/>
    <property type="molecule type" value="Genomic_DNA"/>
</dbReference>
<dbReference type="RefSeq" id="WP_005766961.1">
    <property type="nucleotide sequence ID" value="NC_008783.1"/>
</dbReference>
<dbReference type="SMR" id="A1USR8"/>
<dbReference type="STRING" id="360095.BARBAKC583_0722"/>
<dbReference type="GeneID" id="4684123"/>
<dbReference type="KEGG" id="bbk:BARBAKC583_0722"/>
<dbReference type="PATRIC" id="fig|360095.6.peg.701"/>
<dbReference type="eggNOG" id="COG0202">
    <property type="taxonomic scope" value="Bacteria"/>
</dbReference>
<dbReference type="HOGENOM" id="CLU_053084_0_0_5"/>
<dbReference type="OrthoDB" id="9805706at2"/>
<dbReference type="Proteomes" id="UP000000643">
    <property type="component" value="Chromosome"/>
</dbReference>
<dbReference type="GO" id="GO:0005737">
    <property type="term" value="C:cytoplasm"/>
    <property type="evidence" value="ECO:0007669"/>
    <property type="project" value="UniProtKB-ARBA"/>
</dbReference>
<dbReference type="GO" id="GO:0000428">
    <property type="term" value="C:DNA-directed RNA polymerase complex"/>
    <property type="evidence" value="ECO:0007669"/>
    <property type="project" value="UniProtKB-KW"/>
</dbReference>
<dbReference type="GO" id="GO:0003677">
    <property type="term" value="F:DNA binding"/>
    <property type="evidence" value="ECO:0007669"/>
    <property type="project" value="UniProtKB-UniRule"/>
</dbReference>
<dbReference type="GO" id="GO:0003899">
    <property type="term" value="F:DNA-directed RNA polymerase activity"/>
    <property type="evidence" value="ECO:0007669"/>
    <property type="project" value="UniProtKB-UniRule"/>
</dbReference>
<dbReference type="GO" id="GO:0046983">
    <property type="term" value="F:protein dimerization activity"/>
    <property type="evidence" value="ECO:0007669"/>
    <property type="project" value="InterPro"/>
</dbReference>
<dbReference type="GO" id="GO:0006351">
    <property type="term" value="P:DNA-templated transcription"/>
    <property type="evidence" value="ECO:0007669"/>
    <property type="project" value="UniProtKB-UniRule"/>
</dbReference>
<dbReference type="CDD" id="cd06928">
    <property type="entry name" value="RNAP_alpha_NTD"/>
    <property type="match status" value="1"/>
</dbReference>
<dbReference type="FunFam" id="1.10.150.20:FF:000001">
    <property type="entry name" value="DNA-directed RNA polymerase subunit alpha"/>
    <property type="match status" value="1"/>
</dbReference>
<dbReference type="FunFam" id="2.170.120.12:FF:000001">
    <property type="entry name" value="DNA-directed RNA polymerase subunit alpha"/>
    <property type="match status" value="1"/>
</dbReference>
<dbReference type="Gene3D" id="1.10.150.20">
    <property type="entry name" value="5' to 3' exonuclease, C-terminal subdomain"/>
    <property type="match status" value="1"/>
</dbReference>
<dbReference type="Gene3D" id="2.170.120.12">
    <property type="entry name" value="DNA-directed RNA polymerase, insert domain"/>
    <property type="match status" value="1"/>
</dbReference>
<dbReference type="Gene3D" id="3.30.1360.10">
    <property type="entry name" value="RNA polymerase, RBP11-like subunit"/>
    <property type="match status" value="1"/>
</dbReference>
<dbReference type="HAMAP" id="MF_00059">
    <property type="entry name" value="RNApol_bact_RpoA"/>
    <property type="match status" value="1"/>
</dbReference>
<dbReference type="InterPro" id="IPR011262">
    <property type="entry name" value="DNA-dir_RNA_pol_insert"/>
</dbReference>
<dbReference type="InterPro" id="IPR011263">
    <property type="entry name" value="DNA-dir_RNA_pol_RpoA/D/Rpb3"/>
</dbReference>
<dbReference type="InterPro" id="IPR011773">
    <property type="entry name" value="DNA-dir_RpoA"/>
</dbReference>
<dbReference type="InterPro" id="IPR036603">
    <property type="entry name" value="RBP11-like"/>
</dbReference>
<dbReference type="InterPro" id="IPR011260">
    <property type="entry name" value="RNAP_asu_C"/>
</dbReference>
<dbReference type="InterPro" id="IPR036643">
    <property type="entry name" value="RNApol_insert_sf"/>
</dbReference>
<dbReference type="NCBIfam" id="NF003513">
    <property type="entry name" value="PRK05182.1-2"/>
    <property type="match status" value="1"/>
</dbReference>
<dbReference type="NCBIfam" id="NF003519">
    <property type="entry name" value="PRK05182.2-5"/>
    <property type="match status" value="1"/>
</dbReference>
<dbReference type="NCBIfam" id="TIGR02027">
    <property type="entry name" value="rpoA"/>
    <property type="match status" value="1"/>
</dbReference>
<dbReference type="Pfam" id="PF01000">
    <property type="entry name" value="RNA_pol_A_bac"/>
    <property type="match status" value="1"/>
</dbReference>
<dbReference type="Pfam" id="PF03118">
    <property type="entry name" value="RNA_pol_A_CTD"/>
    <property type="match status" value="1"/>
</dbReference>
<dbReference type="Pfam" id="PF01193">
    <property type="entry name" value="RNA_pol_L"/>
    <property type="match status" value="1"/>
</dbReference>
<dbReference type="SMART" id="SM00662">
    <property type="entry name" value="RPOLD"/>
    <property type="match status" value="1"/>
</dbReference>
<dbReference type="SUPFAM" id="SSF47789">
    <property type="entry name" value="C-terminal domain of RNA polymerase alpha subunit"/>
    <property type="match status" value="1"/>
</dbReference>
<dbReference type="SUPFAM" id="SSF56553">
    <property type="entry name" value="Insert subdomain of RNA polymerase alpha subunit"/>
    <property type="match status" value="1"/>
</dbReference>
<dbReference type="SUPFAM" id="SSF55257">
    <property type="entry name" value="RBP11-like subunits of RNA polymerase"/>
    <property type="match status" value="1"/>
</dbReference>
<name>RPOA_BARBK</name>
<organism>
    <name type="scientific">Bartonella bacilliformis (strain ATCC 35685 / KC583 / Herrer 020/F12,63)</name>
    <dbReference type="NCBI Taxonomy" id="360095"/>
    <lineage>
        <taxon>Bacteria</taxon>
        <taxon>Pseudomonadati</taxon>
        <taxon>Pseudomonadota</taxon>
        <taxon>Alphaproteobacteria</taxon>
        <taxon>Hyphomicrobiales</taxon>
        <taxon>Bartonellaceae</taxon>
        <taxon>Bartonella</taxon>
    </lineage>
</organism>
<comment type="function">
    <text evidence="1">DNA-dependent RNA polymerase catalyzes the transcription of DNA into RNA using the four ribonucleoside triphosphates as substrates.</text>
</comment>
<comment type="catalytic activity">
    <reaction evidence="1">
        <text>RNA(n) + a ribonucleoside 5'-triphosphate = RNA(n+1) + diphosphate</text>
        <dbReference type="Rhea" id="RHEA:21248"/>
        <dbReference type="Rhea" id="RHEA-COMP:14527"/>
        <dbReference type="Rhea" id="RHEA-COMP:17342"/>
        <dbReference type="ChEBI" id="CHEBI:33019"/>
        <dbReference type="ChEBI" id="CHEBI:61557"/>
        <dbReference type="ChEBI" id="CHEBI:140395"/>
        <dbReference type="EC" id="2.7.7.6"/>
    </reaction>
</comment>
<comment type="subunit">
    <text evidence="1">Homodimer. The RNAP catalytic core consists of 2 alpha, 1 beta, 1 beta' and 1 omega subunit. When a sigma factor is associated with the core the holoenzyme is formed, which can initiate transcription.</text>
</comment>
<comment type="domain">
    <text evidence="1">The N-terminal domain is essential for RNAP assembly and basal transcription, whereas the C-terminal domain is involved in interaction with transcriptional regulators and with upstream promoter elements.</text>
</comment>
<comment type="similarity">
    <text evidence="1">Belongs to the RNA polymerase alpha chain family.</text>
</comment>
<sequence>MIQKNWQELIKPNKIEFHAHSNPNVLSVVAEPLERGFGLTLGNALRRILLSSLRGAAITAVQVEGVLHEFSSIPGVREDVADIILNIKEIAIRMEEEGPKRIVVCKEGPGIVKAGDIRTVGDMEILNPEHVICTLDEGAEIRMEFIVNTGKGYVPSDRNCFDDAPIGLIPIDSLYSPINKVSYKVENTREGQVLDYDKLTLTIETNGAVNGKDAVAFAARILQDQLSVFVNFKEPQKELVEEQTSELSFNPALLKKVDELELSVRSANCLKNDNIVYIGDLIQKTESEMLRTPNFGRKSLNEIKEVLACMGLHLGMEISAWPPENIDDLAKHYEDQY</sequence>
<keyword id="KW-0240">DNA-directed RNA polymerase</keyword>
<keyword id="KW-0548">Nucleotidyltransferase</keyword>
<keyword id="KW-0804">Transcription</keyword>
<keyword id="KW-0808">Transferase</keyword>
<accession>A1USR8</accession>
<protein>
    <recommendedName>
        <fullName evidence="1">DNA-directed RNA polymerase subunit alpha</fullName>
        <shortName evidence="1">RNAP subunit alpha</shortName>
        <ecNumber evidence="1">2.7.7.6</ecNumber>
    </recommendedName>
    <alternativeName>
        <fullName evidence="1">RNA polymerase subunit alpha</fullName>
    </alternativeName>
    <alternativeName>
        <fullName evidence="1">Transcriptase subunit alpha</fullName>
    </alternativeName>
</protein>
<proteinExistence type="inferred from homology"/>
<feature type="chain" id="PRO_0000296783" description="DNA-directed RNA polymerase subunit alpha">
    <location>
        <begin position="1"/>
        <end position="337"/>
    </location>
</feature>
<feature type="region of interest" description="Alpha N-terminal domain (alpha-NTD)" evidence="1">
    <location>
        <begin position="1"/>
        <end position="233"/>
    </location>
</feature>
<feature type="region of interest" description="Alpha C-terminal domain (alpha-CTD)" evidence="1">
    <location>
        <begin position="249"/>
        <end position="337"/>
    </location>
</feature>
<reference key="1">
    <citation type="submission" date="2006-12" db="EMBL/GenBank/DDBJ databases">
        <authorList>
            <person name="Hendrix L."/>
            <person name="Mohamoud Y."/>
            <person name="Radune D."/>
            <person name="Shvartsbeyn A."/>
            <person name="Daugherty S."/>
            <person name="Dodson R."/>
            <person name="Durkin A.S."/>
            <person name="Harkins D."/>
            <person name="Huot H."/>
            <person name="Kothari S.P."/>
            <person name="Madupu R."/>
            <person name="Li J."/>
            <person name="Nelson W.C."/>
            <person name="Shrivastava S."/>
            <person name="Giglio M.G."/>
            <person name="Haft D."/>
            <person name="Selengut J."/>
            <person name="Fraser-Ligget C."/>
            <person name="Seshadri R."/>
        </authorList>
    </citation>
    <scope>NUCLEOTIDE SEQUENCE [LARGE SCALE GENOMIC DNA]</scope>
    <source>
        <strain>ATCC 35685 / KC583 / Herrer 020/F12,63</strain>
    </source>
</reference>
<evidence type="ECO:0000255" key="1">
    <source>
        <dbReference type="HAMAP-Rule" id="MF_00059"/>
    </source>
</evidence>